<dbReference type="EMBL" id="AF027501">
    <property type="protein sequence ID" value="AAB84039.1"/>
    <property type="molecule type" value="Genomic_DNA"/>
</dbReference>
<dbReference type="SMR" id="P0A467"/>
<dbReference type="GO" id="GO:0022625">
    <property type="term" value="C:cytosolic large ribosomal subunit"/>
    <property type="evidence" value="ECO:0007669"/>
    <property type="project" value="TreeGrafter"/>
</dbReference>
<dbReference type="GO" id="GO:0003729">
    <property type="term" value="F:mRNA binding"/>
    <property type="evidence" value="ECO:0007669"/>
    <property type="project" value="TreeGrafter"/>
</dbReference>
<dbReference type="GO" id="GO:0003735">
    <property type="term" value="F:structural constituent of ribosome"/>
    <property type="evidence" value="ECO:0007669"/>
    <property type="project" value="InterPro"/>
</dbReference>
<dbReference type="GO" id="GO:0006412">
    <property type="term" value="P:translation"/>
    <property type="evidence" value="ECO:0007669"/>
    <property type="project" value="UniProtKB-UniRule"/>
</dbReference>
<dbReference type="CDD" id="cd00387">
    <property type="entry name" value="Ribosomal_L7_L12"/>
    <property type="match status" value="1"/>
</dbReference>
<dbReference type="FunFam" id="1.20.5.710:FF:000008">
    <property type="entry name" value="50S ribosomal protein L7/L12"/>
    <property type="match status" value="1"/>
</dbReference>
<dbReference type="FunFam" id="3.30.1390.10:FF:000001">
    <property type="entry name" value="50S ribosomal protein L7/L12"/>
    <property type="match status" value="1"/>
</dbReference>
<dbReference type="Gene3D" id="3.30.1390.10">
    <property type="match status" value="1"/>
</dbReference>
<dbReference type="Gene3D" id="1.20.5.710">
    <property type="entry name" value="Single helix bin"/>
    <property type="match status" value="1"/>
</dbReference>
<dbReference type="HAMAP" id="MF_00368">
    <property type="entry name" value="Ribosomal_bL12"/>
    <property type="match status" value="1"/>
</dbReference>
<dbReference type="InterPro" id="IPR000206">
    <property type="entry name" value="Ribosomal_bL12"/>
</dbReference>
<dbReference type="InterPro" id="IPR013823">
    <property type="entry name" value="Ribosomal_bL12_C"/>
</dbReference>
<dbReference type="InterPro" id="IPR014719">
    <property type="entry name" value="Ribosomal_bL12_C/ClpS-like"/>
</dbReference>
<dbReference type="InterPro" id="IPR008932">
    <property type="entry name" value="Ribosomal_bL12_oligo"/>
</dbReference>
<dbReference type="InterPro" id="IPR036235">
    <property type="entry name" value="Ribosomal_bL12_oligo_N_sf"/>
</dbReference>
<dbReference type="NCBIfam" id="TIGR00855">
    <property type="entry name" value="L12"/>
    <property type="match status" value="1"/>
</dbReference>
<dbReference type="PANTHER" id="PTHR45987">
    <property type="entry name" value="39S RIBOSOMAL PROTEIN L12"/>
    <property type="match status" value="1"/>
</dbReference>
<dbReference type="PANTHER" id="PTHR45987:SF4">
    <property type="entry name" value="LARGE RIBOSOMAL SUBUNIT PROTEIN BL12M"/>
    <property type="match status" value="1"/>
</dbReference>
<dbReference type="Pfam" id="PF00542">
    <property type="entry name" value="Ribosomal_L12"/>
    <property type="match status" value="1"/>
</dbReference>
<dbReference type="Pfam" id="PF16320">
    <property type="entry name" value="Ribosomal_L12_N"/>
    <property type="match status" value="1"/>
</dbReference>
<dbReference type="SUPFAM" id="SSF54736">
    <property type="entry name" value="ClpS-like"/>
    <property type="match status" value="1"/>
</dbReference>
<dbReference type="SUPFAM" id="SSF48300">
    <property type="entry name" value="Ribosomal protein L7/12, oligomerisation (N-terminal) domain"/>
    <property type="match status" value="1"/>
</dbReference>
<name>RL7_AQUPY</name>
<protein>
    <recommendedName>
        <fullName evidence="1">Large ribosomal subunit protein bL12</fullName>
    </recommendedName>
    <alternativeName>
        <fullName evidence="2">50S ribosomal protein L7/L12</fullName>
    </alternativeName>
</protein>
<accession>P0A467</accession>
<accession>O67761</accession>
<reference key="1">
    <citation type="journal article" date="1999" name="J. Mol. Evol.">
        <title>RNA polymerase of Aquifex pyrophilus: implications for the evolution of the bacterial rpoBC operon and extremely thermophilic bacteria.</title>
        <authorList>
            <person name="Klenk H.-P."/>
            <person name="Meier T.D."/>
            <person name="Durovic P."/>
            <person name="Schwass V."/>
            <person name="Lottspeich F."/>
            <person name="Dennis P.P."/>
            <person name="Zillig W."/>
        </authorList>
    </citation>
    <scope>NUCLEOTIDE SEQUENCE [GENOMIC DNA]</scope>
    <source>
        <strain>DSM 6858 / JCM 9492 / Kol5A</strain>
    </source>
</reference>
<organism>
    <name type="scientific">Aquifex pyrophilus</name>
    <dbReference type="NCBI Taxonomy" id="2714"/>
    <lineage>
        <taxon>Bacteria</taxon>
        <taxon>Pseudomonadati</taxon>
        <taxon>Aquificota</taxon>
        <taxon>Aquificia</taxon>
        <taxon>Aquificales</taxon>
        <taxon>Aquificaceae</taxon>
        <taxon>Aquifex</taxon>
    </lineage>
</organism>
<sequence>MATLTIDEIVEAIKNMSVLEVAELVKRLEEEFGVSAAAMVAAAPAAGAAAGAPAQAEEKTEFDVILKSPGKNKIQVIKVVREITGLGLKEAKELVDNAPKPIKEGVPKEEAEQIKKKLEEAGAEVELK</sequence>
<keyword id="KW-0687">Ribonucleoprotein</keyword>
<keyword id="KW-0689">Ribosomal protein</keyword>
<evidence type="ECO:0000255" key="1">
    <source>
        <dbReference type="HAMAP-Rule" id="MF_00368"/>
    </source>
</evidence>
<evidence type="ECO:0000305" key="2"/>
<comment type="function">
    <text evidence="1">Forms part of the ribosomal stalk which helps the ribosome interact with GTP-bound translation factors. Is thus essential for accurate translation.</text>
</comment>
<comment type="subunit">
    <text evidence="1">Homodimer. Part of the ribosomal stalk of the 50S ribosomal subunit. Forms a multimeric L10(L12)X complex, where L10 forms an elongated spine to which 2 to 4 L12 dimers bind in a sequential fashion. Binds GTP-bound translation factors.</text>
</comment>
<comment type="similarity">
    <text evidence="1">Belongs to the bacterial ribosomal protein bL12 family.</text>
</comment>
<proteinExistence type="inferred from homology"/>
<gene>
    <name evidence="1" type="primary">rplL</name>
</gene>
<feature type="chain" id="PRO_0000157501" description="Large ribosomal subunit protein bL12">
    <location>
        <begin position="1"/>
        <end position="128"/>
    </location>
</feature>